<proteinExistence type="inferred from homology"/>
<feature type="chain" id="PRO_0000352924" description="Threonylcarbamoyl-AMP synthase">
    <location>
        <begin position="1"/>
        <end position="183"/>
    </location>
</feature>
<feature type="domain" description="YrdC-like" evidence="1">
    <location>
        <begin position="1"/>
        <end position="183"/>
    </location>
</feature>
<evidence type="ECO:0000255" key="1">
    <source>
        <dbReference type="HAMAP-Rule" id="MF_01852"/>
    </source>
</evidence>
<reference key="1">
    <citation type="journal article" date="2007" name="Genome Biol.">
        <title>Characterization and modeling of the Haemophilus influenzae core and supragenomes based on the complete genomic sequences of Rd and 12 clinical nontypeable strains.</title>
        <authorList>
            <person name="Hogg J.S."/>
            <person name="Hu F.Z."/>
            <person name="Janto B."/>
            <person name="Boissy R."/>
            <person name="Hayes J."/>
            <person name="Keefe R."/>
            <person name="Post J.C."/>
            <person name="Ehrlich G.D."/>
        </authorList>
    </citation>
    <scope>NUCLEOTIDE SEQUENCE [LARGE SCALE GENOMIC DNA]</scope>
    <source>
        <strain>PittEE</strain>
    </source>
</reference>
<name>TSAC_HAEIE</name>
<gene>
    <name evidence="1" type="primary">tsaC</name>
    <name type="synonym">rimN</name>
    <name type="ordered locus">CGSHiEE_08915</name>
</gene>
<sequence>MNREQIANALRQNQVVAYPTEAVFGLGCNPQSESAVKKLLDLKQRPVEKGLILVAPSLDFFRPFVDFEQINDEQLSRLQGKYERPTTWIVPSKSTTPYFLTGKFDSIAVRLCDHPSVKALCELTGFALTSTSANLTGEPPCRIADEVRLQFGADFPVLDETVGDARNPSEIRDLRTNQLFRQG</sequence>
<keyword id="KW-0067">ATP-binding</keyword>
<keyword id="KW-0963">Cytoplasm</keyword>
<keyword id="KW-0547">Nucleotide-binding</keyword>
<keyword id="KW-0548">Nucleotidyltransferase</keyword>
<keyword id="KW-0808">Transferase</keyword>
<keyword id="KW-0819">tRNA processing</keyword>
<dbReference type="EC" id="2.7.7.87" evidence="1"/>
<dbReference type="EMBL" id="CP000671">
    <property type="protein sequence ID" value="ABQ99078.1"/>
    <property type="molecule type" value="Genomic_DNA"/>
</dbReference>
<dbReference type="SMR" id="A5UE77"/>
<dbReference type="KEGG" id="hip:CGSHiEE_08915"/>
<dbReference type="HOGENOM" id="CLU_031397_6_0_6"/>
<dbReference type="GO" id="GO:0005737">
    <property type="term" value="C:cytoplasm"/>
    <property type="evidence" value="ECO:0007669"/>
    <property type="project" value="UniProtKB-SubCell"/>
</dbReference>
<dbReference type="GO" id="GO:0005524">
    <property type="term" value="F:ATP binding"/>
    <property type="evidence" value="ECO:0007669"/>
    <property type="project" value="UniProtKB-UniRule"/>
</dbReference>
<dbReference type="GO" id="GO:0003725">
    <property type="term" value="F:double-stranded RNA binding"/>
    <property type="evidence" value="ECO:0007669"/>
    <property type="project" value="InterPro"/>
</dbReference>
<dbReference type="GO" id="GO:0061710">
    <property type="term" value="F:L-threonylcarbamoyladenylate synthase"/>
    <property type="evidence" value="ECO:0007669"/>
    <property type="project" value="UniProtKB-EC"/>
</dbReference>
<dbReference type="GO" id="GO:0000049">
    <property type="term" value="F:tRNA binding"/>
    <property type="evidence" value="ECO:0007669"/>
    <property type="project" value="TreeGrafter"/>
</dbReference>
<dbReference type="GO" id="GO:0006450">
    <property type="term" value="P:regulation of translational fidelity"/>
    <property type="evidence" value="ECO:0007669"/>
    <property type="project" value="TreeGrafter"/>
</dbReference>
<dbReference type="GO" id="GO:0002949">
    <property type="term" value="P:tRNA threonylcarbamoyladenosine modification"/>
    <property type="evidence" value="ECO:0007669"/>
    <property type="project" value="UniProtKB-UniRule"/>
</dbReference>
<dbReference type="FunFam" id="3.90.870.10:FF:000004">
    <property type="entry name" value="Threonylcarbamoyl-AMP synthase"/>
    <property type="match status" value="1"/>
</dbReference>
<dbReference type="Gene3D" id="3.90.870.10">
    <property type="entry name" value="DHBP synthase"/>
    <property type="match status" value="1"/>
</dbReference>
<dbReference type="HAMAP" id="MF_01852">
    <property type="entry name" value="TsaC"/>
    <property type="match status" value="1"/>
</dbReference>
<dbReference type="InterPro" id="IPR017945">
    <property type="entry name" value="DHBP_synth_RibB-like_a/b_dom"/>
</dbReference>
<dbReference type="InterPro" id="IPR006070">
    <property type="entry name" value="Sua5-like_dom"/>
</dbReference>
<dbReference type="InterPro" id="IPR023535">
    <property type="entry name" value="TC-AMP_synthase"/>
</dbReference>
<dbReference type="InterPro" id="IPR050156">
    <property type="entry name" value="TC-AMP_synthase_SUA5"/>
</dbReference>
<dbReference type="PANTHER" id="PTHR17490">
    <property type="entry name" value="SUA5"/>
    <property type="match status" value="1"/>
</dbReference>
<dbReference type="PANTHER" id="PTHR17490:SF18">
    <property type="entry name" value="THREONYLCARBAMOYL-AMP SYNTHASE"/>
    <property type="match status" value="1"/>
</dbReference>
<dbReference type="Pfam" id="PF01300">
    <property type="entry name" value="Sua5_yciO_yrdC"/>
    <property type="match status" value="1"/>
</dbReference>
<dbReference type="SUPFAM" id="SSF55821">
    <property type="entry name" value="YrdC/RibB"/>
    <property type="match status" value="1"/>
</dbReference>
<dbReference type="PROSITE" id="PS51163">
    <property type="entry name" value="YRDC"/>
    <property type="match status" value="1"/>
</dbReference>
<protein>
    <recommendedName>
        <fullName evidence="1">Threonylcarbamoyl-AMP synthase</fullName>
        <shortName evidence="1">TC-AMP synthase</shortName>
        <ecNumber evidence="1">2.7.7.87</ecNumber>
    </recommendedName>
    <alternativeName>
        <fullName evidence="1">L-threonylcarbamoyladenylate synthase</fullName>
    </alternativeName>
    <alternativeName>
        <fullName evidence="1">t(6)A37 threonylcarbamoyladenosine biosynthesis protein TsaC</fullName>
    </alternativeName>
    <alternativeName>
        <fullName evidence="1">tRNA threonylcarbamoyladenosine biosynthesis protein TsaC</fullName>
    </alternativeName>
</protein>
<accession>A5UE77</accession>
<organism>
    <name type="scientific">Haemophilus influenzae (strain PittEE)</name>
    <dbReference type="NCBI Taxonomy" id="374930"/>
    <lineage>
        <taxon>Bacteria</taxon>
        <taxon>Pseudomonadati</taxon>
        <taxon>Pseudomonadota</taxon>
        <taxon>Gammaproteobacteria</taxon>
        <taxon>Pasteurellales</taxon>
        <taxon>Pasteurellaceae</taxon>
        <taxon>Haemophilus</taxon>
    </lineage>
</organism>
<comment type="function">
    <text evidence="1">Required for the formation of a threonylcarbamoyl group on adenosine at position 37 (t(6)A37) in tRNAs that read codons beginning with adenine. Catalyzes the conversion of L-threonine, HCO(3)(-)/CO(2) and ATP to give threonylcarbamoyl-AMP (TC-AMP) as the acyladenylate intermediate, with the release of diphosphate.</text>
</comment>
<comment type="catalytic activity">
    <reaction evidence="1">
        <text>L-threonine + hydrogencarbonate + ATP = L-threonylcarbamoyladenylate + diphosphate + H2O</text>
        <dbReference type="Rhea" id="RHEA:36407"/>
        <dbReference type="ChEBI" id="CHEBI:15377"/>
        <dbReference type="ChEBI" id="CHEBI:17544"/>
        <dbReference type="ChEBI" id="CHEBI:30616"/>
        <dbReference type="ChEBI" id="CHEBI:33019"/>
        <dbReference type="ChEBI" id="CHEBI:57926"/>
        <dbReference type="ChEBI" id="CHEBI:73682"/>
        <dbReference type="EC" id="2.7.7.87"/>
    </reaction>
</comment>
<comment type="subcellular location">
    <subcellularLocation>
        <location evidence="1">Cytoplasm</location>
    </subcellularLocation>
</comment>
<comment type="similarity">
    <text evidence="1">Belongs to the SUA5 family. TsaC subfamily.</text>
</comment>